<evidence type="ECO:0000250" key="1"/>
<evidence type="ECO:0000255" key="2">
    <source>
        <dbReference type="HAMAP-Rule" id="MF_04099"/>
    </source>
</evidence>
<evidence type="ECO:0000255" key="3">
    <source>
        <dbReference type="PROSITE-ProRule" id="PRU01269"/>
    </source>
</evidence>
<evidence type="ECO:0000255" key="4">
    <source>
        <dbReference type="PROSITE-ProRule" id="PRU01270"/>
    </source>
</evidence>
<evidence type="ECO:0007829" key="5">
    <source>
        <dbReference type="PDB" id="4QZV"/>
    </source>
</evidence>
<evidence type="ECO:0007829" key="6">
    <source>
        <dbReference type="PDB" id="7M52"/>
    </source>
</evidence>
<gene>
    <name evidence="2" type="primary">S</name>
    <name type="ORF">2</name>
</gene>
<dbReference type="EMBL" id="EF065505">
    <property type="protein sequence ID" value="ABN10839.1"/>
    <property type="molecule type" value="Genomic_RNA"/>
</dbReference>
<dbReference type="RefSeq" id="YP_001039953.1">
    <property type="nucleotide sequence ID" value="NC_009019.1"/>
</dbReference>
<dbReference type="PDB" id="4QZV">
    <property type="method" value="X-ray"/>
    <property type="resolution" value="2.59 A"/>
    <property type="chains" value="B/D=372-611"/>
</dbReference>
<dbReference type="PDB" id="7M52">
    <property type="method" value="X-ray"/>
    <property type="resolution" value="1.50 A"/>
    <property type="chains" value="A=1231-1245"/>
</dbReference>
<dbReference type="PDBsum" id="4QZV"/>
<dbReference type="PDBsum" id="7M52"/>
<dbReference type="SMR" id="A3EX94"/>
<dbReference type="GlyCosmos" id="A3EX94">
    <property type="glycosylation" value="25 sites, No reported glycans"/>
</dbReference>
<dbReference type="GeneID" id="4835991"/>
<dbReference type="KEGG" id="vg:4835991"/>
<dbReference type="EvolutionaryTrace" id="A3EX94"/>
<dbReference type="Proteomes" id="UP000006574">
    <property type="component" value="Genome"/>
</dbReference>
<dbReference type="GO" id="GO:0044173">
    <property type="term" value="C:host cell endoplasmic reticulum-Golgi intermediate compartment membrane"/>
    <property type="evidence" value="ECO:0007669"/>
    <property type="project" value="UniProtKB-SubCell"/>
</dbReference>
<dbReference type="GO" id="GO:0020002">
    <property type="term" value="C:host cell plasma membrane"/>
    <property type="evidence" value="ECO:0007669"/>
    <property type="project" value="UniProtKB-SubCell"/>
</dbReference>
<dbReference type="GO" id="GO:0016020">
    <property type="term" value="C:membrane"/>
    <property type="evidence" value="ECO:0007669"/>
    <property type="project" value="UniProtKB-UniRule"/>
</dbReference>
<dbReference type="GO" id="GO:0019031">
    <property type="term" value="C:viral envelope"/>
    <property type="evidence" value="ECO:0007669"/>
    <property type="project" value="UniProtKB-UniRule"/>
</dbReference>
<dbReference type="GO" id="GO:0055036">
    <property type="term" value="C:virion membrane"/>
    <property type="evidence" value="ECO:0007669"/>
    <property type="project" value="UniProtKB-SubCell"/>
</dbReference>
<dbReference type="GO" id="GO:0075509">
    <property type="term" value="P:endocytosis involved in viral entry into host cell"/>
    <property type="evidence" value="ECO:0007669"/>
    <property type="project" value="UniProtKB-UniRule"/>
</dbReference>
<dbReference type="GO" id="GO:0039654">
    <property type="term" value="P:fusion of virus membrane with host endosome membrane"/>
    <property type="evidence" value="ECO:0007669"/>
    <property type="project" value="UniProtKB-UniRule"/>
</dbReference>
<dbReference type="GO" id="GO:0019064">
    <property type="term" value="P:fusion of virus membrane with host plasma membrane"/>
    <property type="evidence" value="ECO:0007669"/>
    <property type="project" value="UniProtKB-UniRule"/>
</dbReference>
<dbReference type="GO" id="GO:0046813">
    <property type="term" value="P:receptor-mediated virion attachment to host cell"/>
    <property type="evidence" value="ECO:0007669"/>
    <property type="project" value="UniProtKB-UniRule"/>
</dbReference>
<dbReference type="CDD" id="cd21487">
    <property type="entry name" value="bat_HKU4-like_Spike_S1_RBD"/>
    <property type="match status" value="1"/>
</dbReference>
<dbReference type="CDD" id="cd21626">
    <property type="entry name" value="MERS-CoV-like_Spike_S1_NTD"/>
    <property type="match status" value="1"/>
</dbReference>
<dbReference type="CDD" id="cd22379">
    <property type="entry name" value="MERS-CoV-like_Spike_SD1-2_S1-S2_S2"/>
    <property type="match status" value="1"/>
</dbReference>
<dbReference type="Gene3D" id="1.20.5.300">
    <property type="match status" value="2"/>
</dbReference>
<dbReference type="Gene3D" id="2.20.210.30">
    <property type="match status" value="1"/>
</dbReference>
<dbReference type="Gene3D" id="3.30.70.1840">
    <property type="match status" value="1"/>
</dbReference>
<dbReference type="Gene3D" id="2.60.120.960">
    <property type="entry name" value="Spike glycoprotein, N-terminal domain"/>
    <property type="match status" value="1"/>
</dbReference>
<dbReference type="HAMAP" id="MF_04099">
    <property type="entry name" value="BETA_CORONA_SPIKE"/>
    <property type="match status" value="1"/>
</dbReference>
<dbReference type="InterPro" id="IPR032500">
    <property type="entry name" value="bCoV_S1_N"/>
</dbReference>
<dbReference type="InterPro" id="IPR042578">
    <property type="entry name" value="BETA_CORONA_SPIKE"/>
</dbReference>
<dbReference type="InterPro" id="IPR043607">
    <property type="entry name" value="CoV_S1_C"/>
</dbReference>
<dbReference type="InterPro" id="IPR043473">
    <property type="entry name" value="S2_sf_CoV"/>
</dbReference>
<dbReference type="InterPro" id="IPR043002">
    <property type="entry name" value="Spike_N_sf"/>
</dbReference>
<dbReference type="InterPro" id="IPR044337">
    <property type="entry name" value="Spike_S1_N_MERS-CoV-like"/>
</dbReference>
<dbReference type="InterPro" id="IPR018548">
    <property type="entry name" value="Spike_S1_RBD_bCoV"/>
</dbReference>
<dbReference type="InterPro" id="IPR044378">
    <property type="entry name" value="Spike_S1_RBD_HKU4-like"/>
</dbReference>
<dbReference type="InterPro" id="IPR036326">
    <property type="entry name" value="Spike_S1_RBD_sf_bCoV"/>
</dbReference>
<dbReference type="InterPro" id="IPR002552">
    <property type="entry name" value="Spike_S2_CoV"/>
</dbReference>
<dbReference type="InterPro" id="IPR043614">
    <property type="entry name" value="Spike_S2_CoV_C"/>
</dbReference>
<dbReference type="InterPro" id="IPR044873">
    <property type="entry name" value="Spike_S2_CoV_HR1"/>
</dbReference>
<dbReference type="InterPro" id="IPR044874">
    <property type="entry name" value="Spike_S2_CoV_HR2"/>
</dbReference>
<dbReference type="Pfam" id="PF16451">
    <property type="entry name" value="bCoV_S1_N"/>
    <property type="match status" value="1"/>
</dbReference>
<dbReference type="Pfam" id="PF09408">
    <property type="entry name" value="bCoV_S1_RBD"/>
    <property type="match status" value="1"/>
</dbReference>
<dbReference type="Pfam" id="PF19209">
    <property type="entry name" value="CoV_S1_C"/>
    <property type="match status" value="1"/>
</dbReference>
<dbReference type="Pfam" id="PF01601">
    <property type="entry name" value="CoV_S2"/>
    <property type="match status" value="1"/>
</dbReference>
<dbReference type="Pfam" id="PF19214">
    <property type="entry name" value="CoV_S2_C"/>
    <property type="match status" value="1"/>
</dbReference>
<dbReference type="SUPFAM" id="SSF111474">
    <property type="entry name" value="Coronavirus S2 glycoprotein"/>
    <property type="match status" value="2"/>
</dbReference>
<dbReference type="SUPFAM" id="SSF143587">
    <property type="entry name" value="SARS receptor-binding domain-like"/>
    <property type="match status" value="1"/>
</dbReference>
<dbReference type="PROSITE" id="PS51921">
    <property type="entry name" value="BCOV_S1_CTD"/>
    <property type="match status" value="1"/>
</dbReference>
<dbReference type="PROSITE" id="PS51922">
    <property type="entry name" value="BCOV_S1_NTD"/>
    <property type="match status" value="1"/>
</dbReference>
<dbReference type="PROSITE" id="PS51923">
    <property type="entry name" value="COV_S2_HR1"/>
    <property type="match status" value="1"/>
</dbReference>
<dbReference type="PROSITE" id="PS51924">
    <property type="entry name" value="COV_S2_HR2"/>
    <property type="match status" value="1"/>
</dbReference>
<feature type="signal peptide" evidence="2">
    <location>
        <begin position="1"/>
        <end position="12"/>
    </location>
</feature>
<feature type="chain" id="PRO_0000290321" description="Spike glycoprotein">
    <location>
        <begin position="13"/>
        <end position="1352"/>
    </location>
</feature>
<feature type="chain" id="PRO_0000444061" description="Spike protein S1" evidence="2">
    <location>
        <begin position="13"/>
        <end position="746"/>
    </location>
</feature>
<feature type="chain" id="PRO_0000290323" description="Spike protein S2">
    <location>
        <begin position="750"/>
        <end position="1235"/>
    </location>
</feature>
<feature type="chain" id="PRO_0000444062" description="Spike protein S2'" evidence="2">
    <location>
        <begin position="887"/>
        <end position="1352"/>
    </location>
</feature>
<feature type="topological domain" description="Extracellular" evidence="2">
    <location>
        <begin position="13"/>
        <end position="1297"/>
    </location>
</feature>
<feature type="transmembrane region" description="Helical" evidence="2">
    <location>
        <begin position="1298"/>
        <end position="1318"/>
    </location>
</feature>
<feature type="topological domain" description="Cytoplasmic" evidence="2">
    <location>
        <begin position="1319"/>
        <end position="1352"/>
    </location>
</feature>
<feature type="domain" description="BetaCoV S1-NTD" evidence="4">
    <location>
        <begin position="21"/>
        <end position="356"/>
    </location>
</feature>
<feature type="domain" description="BetaCoV S1-CTD" evidence="3">
    <location>
        <begin position="386"/>
        <end position="592"/>
    </location>
</feature>
<feature type="region of interest" description="Fusion peptide 1" evidence="2">
    <location>
        <begin position="887"/>
        <end position="908"/>
    </location>
</feature>
<feature type="region of interest" description="Fusion peptide 2" evidence="2">
    <location>
        <begin position="906"/>
        <end position="928"/>
    </location>
</feature>
<feature type="region of interest" description="Heptad repeat 1" evidence="2">
    <location>
        <begin position="993"/>
        <end position="1043"/>
    </location>
</feature>
<feature type="region of interest" description="Heptad repeat 2" evidence="2">
    <location>
        <begin position="1247"/>
        <end position="1286"/>
    </location>
</feature>
<feature type="coiled-coil region" evidence="2">
    <location>
        <begin position="1022"/>
        <end position="1066"/>
    </location>
</feature>
<feature type="coiled-coil region" evidence="2">
    <location>
        <begin position="1259"/>
        <end position="1287"/>
    </location>
</feature>
<feature type="short sequence motif" description="KxHxx" evidence="2">
    <location>
        <begin position="1350"/>
        <end position="1352"/>
    </location>
</feature>
<feature type="site" description="Cleavage" evidence="1">
    <location>
        <begin position="749"/>
        <end position="750"/>
    </location>
</feature>
<feature type="site" description="Cleavage" evidence="2">
    <location>
        <begin position="886"/>
        <end position="887"/>
    </location>
</feature>
<feature type="glycosylation site" description="N-linked (GlcNAc...) asparagine; by host" evidence="2">
    <location>
        <position position="30"/>
    </location>
</feature>
<feature type="glycosylation site" description="N-linked (GlcNAc...) asparagine; by host" evidence="2">
    <location>
        <position position="71"/>
    </location>
</feature>
<feature type="glycosylation site" description="N-linked (GlcNAc...) asparagine; by host" evidence="2">
    <location>
        <position position="111"/>
    </location>
</feature>
<feature type="glycosylation site" description="N-linked (GlcNAc...) asparagine; by host" evidence="2">
    <location>
        <position position="132"/>
    </location>
</feature>
<feature type="glycosylation site" description="N-linked (GlcNAc...) asparagine; by host" evidence="2">
    <location>
        <position position="162"/>
    </location>
</feature>
<feature type="glycosylation site" description="N-linked (GlcNAc...) asparagine; by host" evidence="2">
    <location>
        <position position="172"/>
    </location>
</feature>
<feature type="glycosylation site" description="N-linked (GlcNAc...) asparagine; by host" evidence="2">
    <location>
        <position position="227"/>
    </location>
</feature>
<feature type="glycosylation site" description="N-linked (GlcNAc...) asparagine; by host" evidence="2">
    <location>
        <position position="241"/>
    </location>
</feature>
<feature type="glycosylation site" description="N-linked (GlcNAc...) asparagine; by host" evidence="2">
    <location>
        <position position="384"/>
    </location>
</feature>
<feature type="glycosylation site" description="N-linked (GlcNAc...) asparagine; by host" evidence="2">
    <location>
        <position position="415"/>
    </location>
</feature>
<feature type="glycosylation site" description="N-linked (GlcNAc...) asparagine; by host" evidence="2">
    <location>
        <position position="492"/>
    </location>
</feature>
<feature type="glycosylation site" description="N-linked (GlcNAc...) asparagine; by host" evidence="2">
    <location>
        <position position="624"/>
    </location>
</feature>
<feature type="glycosylation site" description="N-linked (GlcNAc...) asparagine; by host" evidence="2">
    <location>
        <position position="723"/>
    </location>
</feature>
<feature type="glycosylation site" description="N-linked (GlcNAc...) asparagine; by host" evidence="2">
    <location>
        <position position="762"/>
    </location>
</feature>
<feature type="glycosylation site" description="N-linked (GlcNAc...) asparagine; by host" evidence="2">
    <location>
        <position position="773"/>
    </location>
</feature>
<feature type="glycosylation site" description="N-linked (GlcNAc...) asparagine; by host" evidence="2">
    <location>
        <position position="784"/>
    </location>
</feature>
<feature type="glycosylation site" description="N-linked (GlcNAc...) asparagine; by host" evidence="2">
    <location>
        <position position="869"/>
    </location>
</feature>
<feature type="glycosylation site" description="N-linked (GlcNAc...) asparagine; by host" evidence="2">
    <location>
        <position position="1144"/>
    </location>
</feature>
<feature type="glycosylation site" description="N-linked (GlcNAc...) asparagine; by host" evidence="2">
    <location>
        <position position="1147"/>
    </location>
</feature>
<feature type="glycosylation site" description="N-linked (GlcNAc...) asparagine; by host" evidence="2">
    <location>
        <position position="1174"/>
    </location>
</feature>
<feature type="glycosylation site" description="N-linked (GlcNAc...) asparagine; by host" evidence="2">
    <location>
        <position position="1226"/>
    </location>
</feature>
<feature type="glycosylation site" description="N-linked (GlcNAc...) asparagine; by host" evidence="2">
    <location>
        <position position="1242"/>
    </location>
</feature>
<feature type="glycosylation site" description="N-linked (GlcNAc...) asparagine; by host" evidence="2">
    <location>
        <position position="1257"/>
    </location>
</feature>
<feature type="glycosylation site" description="N-linked (GlcNAc...) asparagine; by host" evidence="2">
    <location>
        <position position="1278"/>
    </location>
</feature>
<feature type="glycosylation site" description="N-linked (GlcNAc...) asparagine; by host" evidence="2">
    <location>
        <position position="1289"/>
    </location>
</feature>
<feature type="disulfide bond" evidence="4">
    <location>
        <begin position="191"/>
        <end position="242"/>
    </location>
</feature>
<feature type="disulfide bond" evidence="4">
    <location>
        <begin position="344"/>
        <end position="354"/>
    </location>
</feature>
<feature type="disulfide bond" evidence="3">
    <location>
        <begin position="388"/>
        <end position="412"/>
    </location>
</feature>
<feature type="disulfide bond" evidence="3">
    <location>
        <begin position="430"/>
        <end position="483"/>
    </location>
</feature>
<feature type="disulfide bond" evidence="3">
    <location>
        <begin position="442"/>
        <end position="590"/>
    </location>
</feature>
<feature type="disulfide bond" evidence="2">
    <location>
        <begin position="911"/>
        <end position="924"/>
    </location>
</feature>
<feature type="turn" evidence="5">
    <location>
        <begin position="392"/>
        <end position="394"/>
    </location>
</feature>
<feature type="helix" evidence="5">
    <location>
        <begin position="401"/>
        <end position="403"/>
    </location>
</feature>
<feature type="strand" evidence="5">
    <location>
        <begin position="405"/>
        <end position="409"/>
    </location>
</feature>
<feature type="helix" evidence="5">
    <location>
        <begin position="416"/>
        <end position="420"/>
    </location>
</feature>
<feature type="strand" evidence="5">
    <location>
        <begin position="423"/>
        <end position="433"/>
    </location>
</feature>
<feature type="helix" evidence="5">
    <location>
        <begin position="437"/>
        <end position="439"/>
    </location>
</feature>
<feature type="strand" evidence="5">
    <location>
        <begin position="443"/>
        <end position="452"/>
    </location>
</feature>
<feature type="helix" evidence="5">
    <location>
        <begin position="455"/>
        <end position="461"/>
    </location>
</feature>
<feature type="helix" evidence="5">
    <location>
        <begin position="468"/>
        <end position="472"/>
    </location>
</feature>
<feature type="strand" evidence="5">
    <location>
        <begin position="482"/>
        <end position="489"/>
    </location>
</feature>
<feature type="strand" evidence="5">
    <location>
        <begin position="499"/>
        <end position="511"/>
    </location>
</feature>
<feature type="turn" evidence="5">
    <location>
        <begin position="512"/>
        <end position="515"/>
    </location>
</feature>
<feature type="strand" evidence="5">
    <location>
        <begin position="517"/>
        <end position="520"/>
    </location>
</feature>
<feature type="helix" evidence="5">
    <location>
        <begin position="532"/>
        <end position="534"/>
    </location>
</feature>
<feature type="strand" evidence="5">
    <location>
        <begin position="544"/>
        <end position="549"/>
    </location>
</feature>
<feature type="turn" evidence="5">
    <location>
        <begin position="552"/>
        <end position="555"/>
    </location>
</feature>
<feature type="strand" evidence="5">
    <location>
        <begin position="556"/>
        <end position="567"/>
    </location>
</feature>
<feature type="strand" evidence="5">
    <location>
        <begin position="573"/>
        <end position="581"/>
    </location>
</feature>
<feature type="strand" evidence="5">
    <location>
        <begin position="584"/>
        <end position="586"/>
    </location>
</feature>
<feature type="helix" evidence="6">
    <location>
        <begin position="1232"/>
        <end position="1239"/>
    </location>
</feature>
<comment type="function">
    <molecule>Spike protein S1</molecule>
    <text evidence="2">Attaches the virion to the cell membrane by interacting with host receptor, initiating the infection.</text>
</comment>
<comment type="function">
    <molecule>Spike protein S2</molecule>
    <text evidence="2">Mediates fusion of the virion and cellular membranes by acting as a class I viral fusion protein. Under the current model, the protein has at least three conformational states: pre-fusion native state, pre-hairpin intermediate state, and post-fusion hairpin state. During viral and target cell membrane fusion, the coiled coil regions (heptad repeats) assume a trimer-of-hairpins structure, positioning the fusion peptide in close proximity to the C-terminal region of the ectodomain. The formation of this structure appears to drive apposition and subsequent fusion of viral and target cell membranes.</text>
</comment>
<comment type="function">
    <molecule>Spike protein S2'</molecule>
    <text evidence="2">Acts as a viral fusion peptide which is unmasked following S2 cleavage occurring upon virus endocytosis.</text>
</comment>
<comment type="subunit">
    <text evidence="2">Homotrimer; each monomer consists of a S1 and a S2 subunit. The resulting peplomers protrude from the virus surface as spikes.</text>
</comment>
<comment type="subcellular location">
    <subcellularLocation>
        <location evidence="2">Virion membrane</location>
        <topology evidence="2">Single-pass type I membrane protein</topology>
    </subcellularLocation>
    <subcellularLocation>
        <location evidence="2">Host endoplasmic reticulum-Golgi intermediate compartment membrane</location>
        <topology evidence="2">Single-pass type I membrane protein</topology>
    </subcellularLocation>
    <subcellularLocation>
        <location evidence="2">Host cell membrane</location>
        <topology evidence="2">Single-pass type I membrane protein</topology>
    </subcellularLocation>
    <text evidence="2">Accumulates in the endoplasmic reticulum-Golgi intermediate compartment, where it participates in virus particle assembly. Some S oligomers are transported to the host plasma membrane, where they may mediate cell-cell fusion.</text>
</comment>
<comment type="domain">
    <text evidence="2">Fusion peptide 1 (FP1) and fusion peptide 2 (FP2) function cooperatively and have a membrane-ordering effect on lipid headgroups and shallow hydrophobic regions of target bilayers. They are considered as two domains of an extended, bipartite FP. The membrane-ordering activity is calcium-dependent and also dependent on correct folding, which is maintained by an internal disulfide bond in FP2.</text>
</comment>
<comment type="PTM">
    <text evidence="2">Specific enzymatic cleavages in vivo yield mature proteins. The precursor is processed into S1 and S2 by host cell furin or another cellular protease to yield the mature S1 and S2 proteins. Additionally, a second cleavage leads to the release of a fusion peptide after viral attachment to host cell receptor.</text>
</comment>
<comment type="PTM">
    <text evidence="2">The cytoplasmic Cys-rich domain is palmitoylated. Spike glycoprotein is digested within host endosomes.</text>
</comment>
<comment type="similarity">
    <text evidence="2">Belongs to the betacoronaviruses spike protein family.</text>
</comment>
<keyword id="KW-0002">3D-structure</keyword>
<keyword id="KW-0175">Coiled coil</keyword>
<keyword id="KW-1015">Disulfide bond</keyword>
<keyword id="KW-1170">Fusion of virus membrane with host endosomal membrane</keyword>
<keyword id="KW-1168">Fusion of virus membrane with host membrane</keyword>
<keyword id="KW-0325">Glycoprotein</keyword>
<keyword id="KW-1032">Host cell membrane</keyword>
<keyword id="KW-1043">Host membrane</keyword>
<keyword id="KW-0945">Host-virus interaction</keyword>
<keyword id="KW-0449">Lipoprotein</keyword>
<keyword id="KW-0472">Membrane</keyword>
<keyword id="KW-0564">Palmitate</keyword>
<keyword id="KW-1185">Reference proteome</keyword>
<keyword id="KW-0732">Signal</keyword>
<keyword id="KW-0812">Transmembrane</keyword>
<keyword id="KW-1133">Transmembrane helix</keyword>
<keyword id="KW-1161">Viral attachment to host cell</keyword>
<keyword id="KW-0261">Viral envelope protein</keyword>
<keyword id="KW-1162">Viral penetration into host cytoplasm</keyword>
<keyword id="KW-0946">Virion</keyword>
<keyword id="KW-0843">Virulence</keyword>
<keyword id="KW-1160">Virus entry into host cell</keyword>
<name>SPIKE_BCHK4</name>
<protein>
    <recommendedName>
        <fullName evidence="2">Spike glycoprotein</fullName>
        <shortName evidence="2">S glycoprotein</shortName>
    </recommendedName>
    <alternativeName>
        <fullName evidence="2">E2</fullName>
    </alternativeName>
    <alternativeName>
        <fullName evidence="2">Peplomer protein</fullName>
    </alternativeName>
    <component>
        <recommendedName>
            <fullName evidence="2">Spike protein S1</fullName>
        </recommendedName>
    </component>
    <component>
        <recommendedName>
            <fullName evidence="2">Spike protein S2</fullName>
        </recommendedName>
    </component>
    <component>
        <recommendedName>
            <fullName evidence="2">Spike protein S2'</fullName>
        </recommendedName>
    </component>
</protein>
<accession>A3EX94</accession>
<organism>
    <name type="scientific">Bat coronavirus HKU4</name>
    <name type="common">BtCoV</name>
    <name type="synonym">BtCoV/HKU4/2004</name>
    <dbReference type="NCBI Taxonomy" id="694007"/>
    <lineage>
        <taxon>Viruses</taxon>
        <taxon>Riboviria</taxon>
        <taxon>Orthornavirae</taxon>
        <taxon>Pisuviricota</taxon>
        <taxon>Pisoniviricetes</taxon>
        <taxon>Nidovirales</taxon>
        <taxon>Cornidovirineae</taxon>
        <taxon>Coronaviridae</taxon>
        <taxon>Orthocoronavirinae</taxon>
        <taxon>Betacoronavirus</taxon>
        <taxon>Merbecovirus</taxon>
    </lineage>
</organism>
<sequence>MTLLMCLLMSLLIFVRGCDSQFVDMSPASNTSECLESQVDAAAFSKLMWPYPIDPSKVDGIIYPLGRTYSNITLAYTGLFPLQGDLGSQYLYSVSHAVGHDGDPTKAYISNYSLLVNDFDNGFVVRIGAAANSTGTIVISPSVNTKIKKAYPAFILGSSLTNTSAGQPLYANYSLTIIPDGCGTVLHAFYCILKPRTVNRCPSGTGYVSYFIYETVHNDCQSTINRNASLNSFKSFFDLVNCTFFNSWDITADETKEWFGITQDTQGVHLYSSRKGDLYGGNMFRFATLPVYEGIKYYTVIPRSFRSKANKREAWAAFYVYKLHQLTYLLDFSVDGYIRRAIDCGHDDLSQLHCSYTSFEVDTGVYSVSSYEASATGTFIEQPNATECDFSPMLTGVAPQVYNFKRLVFSNCNYNLTKLLSLFAVDEFSCNGISPDSIARGCYSTLTVDYFAYPLSMKSYIRPGSAGNIPLYNYKQSFANPTCRVMASVLANVTITKPHAYGYISKCSRLTGANQDVETPLYINPGEYSICRDFSPGGFSEDGQVFKRTLTQFEGGGLLIGVGTRVPMTDNLQMSFIISVQYGTGTDSVCPMLDLGDSLTITNRLGKCVDYSLYGVTGRGVFQNCTAVGVKQQRFVYDSFDNLVGYYSDDGNYYCVRPCVSVPVSVIYDKSTNLHATLFGSVACEHVTTMMSQFSRLTQSNLRRRDSNIPLQTAVGCVIGLSNNSLVVSDCKLPLGQSLCAVPPVSTFRSYSASQFQLAVLNYTSPIVVTPINSSGFTAAIPTNFSFSVTQEYIETSIQKVTVDCKQYVCNGFTRCEKLLVEYGQFCSKINQALHGANLRQDESVYSLYSNIKTTSTQTLEYGLNGDFNLTLLQVPQIGGSSSSYRSAIEDLLFDKVTIADPGYMQGYDDCMKQGPQSARDLICAQYVSGYKVLPPLYDPNMEAAYTSSLLGSIAGAGWTAGLSSFAAIPFAQSMFYRLNGVGITQQVLSENQKLIANKFNQALGAMQTGFTTSNLAFSKVQDAVNANAQALSKLASELSNTFGAISSSISDILARLDTVEQDAQIDRLINGRLISLNAFVSQQLVRSETAARSAQLASDKVNECVKSQSKRNGFCGSGTHIVSFVVNAPNGFYFFHVGYVPTNYTNVTAAYGLCNNNNPPLCIAPIDGYFITNQTTTYSVDTEWYYTGSSFYKPEPITQANSRYVSSDVKFDKLENNLPPPLLENSTDVDFKDELEEFFKNVTSHGPNFAEISKINTTLLDLSDEMAMLQEVVKQLNDSYIDLKELGNYTYYNKWPWYVWLGFIAGLVALLLCVFFLLCCTGCGTSCLGKMKCKNCCDSYEEYDVEKIHVH</sequence>
<organismHost>
    <name type="scientific">Tylonycteris pachypus</name>
    <name type="common">Lesser bamboo bat</name>
    <name type="synonym">Vespertilio pachypus</name>
    <dbReference type="NCBI Taxonomy" id="258959"/>
</organismHost>
<proteinExistence type="evidence at protein level"/>
<reference key="1">
    <citation type="journal article" date="2007" name="J. Virol.">
        <title>Comparative analysis of twelve genomes of three novel group 2c and group 2d coronaviruses reveals unique group and subgroup features.</title>
        <authorList>
            <person name="Woo P.C.Y."/>
            <person name="Wang M."/>
            <person name="Lau S.K.P."/>
            <person name="Xu H.F."/>
            <person name="Poon R.W.S."/>
            <person name="Guo R."/>
            <person name="Wong B.H.L."/>
            <person name="Gao K."/>
            <person name="Tsoi H.-W."/>
            <person name="Huang Y."/>
            <person name="Li K.S.M."/>
            <person name="Lam C.S.F."/>
            <person name="Chan K.-H."/>
            <person name="Zheng B.-J."/>
            <person name="Yuen K.-Y."/>
        </authorList>
    </citation>
    <scope>NUCLEOTIDE SEQUENCE [GENOMIC RNA]</scope>
    <source>
        <strain>Isolate HKU4-1</strain>
    </source>
</reference>